<sequence>MNAKGKVIKYGNNVDTDVIIPARYLNTSDPAELASHCMEDLDEKFTQRVQKGDVMVAGKNFGCGSSREHAPISIKASGISCVIAETFARIFYRNAVNIGLPIIECSEAAKDIKDNDQVEIDFDKGLIKNLTTGKTYQGQPFPEFMQEIISADGLIQYIKNSLS</sequence>
<accession>B8I4G1</accession>
<feature type="chain" id="PRO_1000213361" description="3-isopropylmalate dehydratase small subunit">
    <location>
        <begin position="1"/>
        <end position="163"/>
    </location>
</feature>
<gene>
    <name evidence="1" type="primary">leuD</name>
    <name type="ordered locus">Ccel_0127</name>
</gene>
<evidence type="ECO:0000255" key="1">
    <source>
        <dbReference type="HAMAP-Rule" id="MF_01032"/>
    </source>
</evidence>
<comment type="function">
    <text evidence="1">Catalyzes the isomerization between 2-isopropylmalate and 3-isopropylmalate, via the formation of 2-isopropylmaleate.</text>
</comment>
<comment type="catalytic activity">
    <reaction evidence="1">
        <text>(2R,3S)-3-isopropylmalate = (2S)-2-isopropylmalate</text>
        <dbReference type="Rhea" id="RHEA:32287"/>
        <dbReference type="ChEBI" id="CHEBI:1178"/>
        <dbReference type="ChEBI" id="CHEBI:35121"/>
        <dbReference type="EC" id="4.2.1.33"/>
    </reaction>
</comment>
<comment type="pathway">
    <text evidence="1">Amino-acid biosynthesis; L-leucine biosynthesis; L-leucine from 3-methyl-2-oxobutanoate: step 2/4.</text>
</comment>
<comment type="subunit">
    <text evidence="1">Heterodimer of LeuC and LeuD.</text>
</comment>
<comment type="similarity">
    <text evidence="1">Belongs to the LeuD family. LeuD type 2 subfamily.</text>
</comment>
<proteinExistence type="inferred from homology"/>
<protein>
    <recommendedName>
        <fullName evidence="1">3-isopropylmalate dehydratase small subunit</fullName>
        <ecNumber evidence="1">4.2.1.33</ecNumber>
    </recommendedName>
    <alternativeName>
        <fullName evidence="1">Alpha-IPM isomerase</fullName>
        <shortName evidence="1">IPMI</shortName>
    </alternativeName>
    <alternativeName>
        <fullName evidence="1">Isopropylmalate isomerase</fullName>
    </alternativeName>
</protein>
<name>LEUD_RUMCH</name>
<keyword id="KW-0028">Amino-acid biosynthesis</keyword>
<keyword id="KW-0100">Branched-chain amino acid biosynthesis</keyword>
<keyword id="KW-0432">Leucine biosynthesis</keyword>
<keyword id="KW-0456">Lyase</keyword>
<keyword id="KW-1185">Reference proteome</keyword>
<dbReference type="EC" id="4.2.1.33" evidence="1"/>
<dbReference type="EMBL" id="CP001348">
    <property type="protein sequence ID" value="ACL74515.1"/>
    <property type="molecule type" value="Genomic_DNA"/>
</dbReference>
<dbReference type="RefSeq" id="WP_012634581.1">
    <property type="nucleotide sequence ID" value="NC_011898.1"/>
</dbReference>
<dbReference type="SMR" id="B8I4G1"/>
<dbReference type="STRING" id="394503.Ccel_0127"/>
<dbReference type="KEGG" id="cce:Ccel_0127"/>
<dbReference type="eggNOG" id="COG0066">
    <property type="taxonomic scope" value="Bacteria"/>
</dbReference>
<dbReference type="HOGENOM" id="CLU_081378_1_1_9"/>
<dbReference type="OrthoDB" id="9777465at2"/>
<dbReference type="UniPathway" id="UPA00048">
    <property type="reaction ID" value="UER00071"/>
</dbReference>
<dbReference type="Proteomes" id="UP000001349">
    <property type="component" value="Chromosome"/>
</dbReference>
<dbReference type="GO" id="GO:0003861">
    <property type="term" value="F:3-isopropylmalate dehydratase activity"/>
    <property type="evidence" value="ECO:0007669"/>
    <property type="project" value="UniProtKB-UniRule"/>
</dbReference>
<dbReference type="GO" id="GO:0009098">
    <property type="term" value="P:L-leucine biosynthetic process"/>
    <property type="evidence" value="ECO:0007669"/>
    <property type="project" value="UniProtKB-UniRule"/>
</dbReference>
<dbReference type="CDD" id="cd01577">
    <property type="entry name" value="IPMI_Swivel"/>
    <property type="match status" value="1"/>
</dbReference>
<dbReference type="FunFam" id="3.20.19.10:FF:000007">
    <property type="entry name" value="Isopropylmalate/citramalate isomerase small subunit"/>
    <property type="match status" value="1"/>
</dbReference>
<dbReference type="Gene3D" id="3.20.19.10">
    <property type="entry name" value="Aconitase, domain 4"/>
    <property type="match status" value="1"/>
</dbReference>
<dbReference type="HAMAP" id="MF_01032">
    <property type="entry name" value="LeuD_type2"/>
    <property type="match status" value="1"/>
</dbReference>
<dbReference type="InterPro" id="IPR015928">
    <property type="entry name" value="Aconitase/3IPM_dehydase_swvl"/>
</dbReference>
<dbReference type="InterPro" id="IPR000573">
    <property type="entry name" value="AconitaseA/IPMdHydase_ssu_swvl"/>
</dbReference>
<dbReference type="InterPro" id="IPR033940">
    <property type="entry name" value="IPMI_Swivel"/>
</dbReference>
<dbReference type="InterPro" id="IPR050075">
    <property type="entry name" value="LeuD"/>
</dbReference>
<dbReference type="InterPro" id="IPR011824">
    <property type="entry name" value="LeuD/DmdB_bac"/>
</dbReference>
<dbReference type="InterPro" id="IPR011827">
    <property type="entry name" value="LeuD_type2/HacB/DmdB"/>
</dbReference>
<dbReference type="NCBIfam" id="TIGR02084">
    <property type="entry name" value="leud"/>
    <property type="match status" value="1"/>
</dbReference>
<dbReference type="NCBIfam" id="TIGR02087">
    <property type="entry name" value="LEUD_arch"/>
    <property type="match status" value="1"/>
</dbReference>
<dbReference type="PANTHER" id="PTHR43345:SF2">
    <property type="entry name" value="3-ISOPROPYLMALATE DEHYDRATASE SMALL SUBUNIT 1"/>
    <property type="match status" value="1"/>
</dbReference>
<dbReference type="PANTHER" id="PTHR43345">
    <property type="entry name" value="3-ISOPROPYLMALATE DEHYDRATASE SMALL SUBUNIT 2-RELATED-RELATED"/>
    <property type="match status" value="1"/>
</dbReference>
<dbReference type="Pfam" id="PF00694">
    <property type="entry name" value="Aconitase_C"/>
    <property type="match status" value="1"/>
</dbReference>
<dbReference type="SUPFAM" id="SSF52016">
    <property type="entry name" value="LeuD/IlvD-like"/>
    <property type="match status" value="1"/>
</dbReference>
<organism>
    <name type="scientific">Ruminiclostridium cellulolyticum (strain ATCC 35319 / DSM 5812 / JCM 6584 / H10)</name>
    <name type="common">Clostridium cellulolyticum</name>
    <dbReference type="NCBI Taxonomy" id="394503"/>
    <lineage>
        <taxon>Bacteria</taxon>
        <taxon>Bacillati</taxon>
        <taxon>Bacillota</taxon>
        <taxon>Clostridia</taxon>
        <taxon>Eubacteriales</taxon>
        <taxon>Oscillospiraceae</taxon>
        <taxon>Ruminiclostridium</taxon>
    </lineage>
</organism>
<reference key="1">
    <citation type="submission" date="2009-01" db="EMBL/GenBank/DDBJ databases">
        <title>Complete sequence of Clostridium cellulolyticum H10.</title>
        <authorList>
            <consortium name="US DOE Joint Genome Institute"/>
            <person name="Lucas S."/>
            <person name="Copeland A."/>
            <person name="Lapidus A."/>
            <person name="Glavina del Rio T."/>
            <person name="Dalin E."/>
            <person name="Tice H."/>
            <person name="Bruce D."/>
            <person name="Goodwin L."/>
            <person name="Pitluck S."/>
            <person name="Chertkov O."/>
            <person name="Saunders E."/>
            <person name="Brettin T."/>
            <person name="Detter J.C."/>
            <person name="Han C."/>
            <person name="Larimer F."/>
            <person name="Land M."/>
            <person name="Hauser L."/>
            <person name="Kyrpides N."/>
            <person name="Ivanova N."/>
            <person name="Zhou J."/>
            <person name="Richardson P."/>
        </authorList>
    </citation>
    <scope>NUCLEOTIDE SEQUENCE [LARGE SCALE GENOMIC DNA]</scope>
    <source>
        <strain>ATCC 35319 / DSM 5812 / JCM 6584 / H10</strain>
    </source>
</reference>